<sequence length="308" mass="32227">MEWLEITVRTPPEGVELVADIFQEIGTGGVVIEDPAVIFKYAGATCPEEWAVPESATADGLPRVKGYLPADGTQSKRLEELAAVLARLLPGPASAVSTRTVSEEDWANAWKKYYKPVRAGRRLVVKPSWEDYRAEEGDLVIEMDPGMAFGSGTHATTCLCLRLLEKYVRPGGTVYDVGTGSGVLAVAAARLGAGRVVAVDIDPLACRVAAGNAERNGVAGKVQVVQGNLLEKVEGRADLVVANIIADVIAAFAPEAAGALAPGGVLIASGIIEEKAGLVVCALEAAGLAVCERDEEGRWVALAARLKA</sequence>
<proteinExistence type="inferred from homology"/>
<reference key="1">
    <citation type="journal article" date="2008" name="Genome Res.">
        <title>The genome of Pelotomaculum thermopropionicum reveals niche-associated evolution in anaerobic microbiota.</title>
        <authorList>
            <person name="Kosaka T."/>
            <person name="Kato S."/>
            <person name="Shimoyama T."/>
            <person name="Ishii S."/>
            <person name="Abe T."/>
            <person name="Watanabe K."/>
        </authorList>
    </citation>
    <scope>NUCLEOTIDE SEQUENCE [LARGE SCALE GENOMIC DNA]</scope>
    <source>
        <strain>DSM 13744 / JCM 10971 / SI</strain>
    </source>
</reference>
<name>PRMA_PELTS</name>
<keyword id="KW-0963">Cytoplasm</keyword>
<keyword id="KW-0489">Methyltransferase</keyword>
<keyword id="KW-1185">Reference proteome</keyword>
<keyword id="KW-0949">S-adenosyl-L-methionine</keyword>
<keyword id="KW-0808">Transferase</keyword>
<gene>
    <name evidence="1" type="primary">prmA</name>
    <name type="ordered locus">PTH_0880</name>
</gene>
<feature type="chain" id="PRO_1000083356" description="Ribosomal protein L11 methyltransferase">
    <location>
        <begin position="1"/>
        <end position="308"/>
    </location>
</feature>
<feature type="binding site" evidence="1">
    <location>
        <position position="157"/>
    </location>
    <ligand>
        <name>S-adenosyl-L-methionine</name>
        <dbReference type="ChEBI" id="CHEBI:59789"/>
    </ligand>
</feature>
<feature type="binding site" evidence="1">
    <location>
        <position position="178"/>
    </location>
    <ligand>
        <name>S-adenosyl-L-methionine</name>
        <dbReference type="ChEBI" id="CHEBI:59789"/>
    </ligand>
</feature>
<feature type="binding site" evidence="1">
    <location>
        <position position="200"/>
    </location>
    <ligand>
        <name>S-adenosyl-L-methionine</name>
        <dbReference type="ChEBI" id="CHEBI:59789"/>
    </ligand>
</feature>
<feature type="binding site" evidence="1">
    <location>
        <position position="243"/>
    </location>
    <ligand>
        <name>S-adenosyl-L-methionine</name>
        <dbReference type="ChEBI" id="CHEBI:59789"/>
    </ligand>
</feature>
<organism>
    <name type="scientific">Pelotomaculum thermopropionicum (strain DSM 13744 / JCM 10971 / SI)</name>
    <dbReference type="NCBI Taxonomy" id="370438"/>
    <lineage>
        <taxon>Bacteria</taxon>
        <taxon>Bacillati</taxon>
        <taxon>Bacillota</taxon>
        <taxon>Clostridia</taxon>
        <taxon>Eubacteriales</taxon>
        <taxon>Desulfotomaculaceae</taxon>
        <taxon>Pelotomaculum</taxon>
    </lineage>
</organism>
<evidence type="ECO:0000255" key="1">
    <source>
        <dbReference type="HAMAP-Rule" id="MF_00735"/>
    </source>
</evidence>
<comment type="function">
    <text evidence="1">Methylates ribosomal protein L11.</text>
</comment>
<comment type="catalytic activity">
    <reaction evidence="1">
        <text>L-lysyl-[protein] + 3 S-adenosyl-L-methionine = N(6),N(6),N(6)-trimethyl-L-lysyl-[protein] + 3 S-adenosyl-L-homocysteine + 3 H(+)</text>
        <dbReference type="Rhea" id="RHEA:54192"/>
        <dbReference type="Rhea" id="RHEA-COMP:9752"/>
        <dbReference type="Rhea" id="RHEA-COMP:13826"/>
        <dbReference type="ChEBI" id="CHEBI:15378"/>
        <dbReference type="ChEBI" id="CHEBI:29969"/>
        <dbReference type="ChEBI" id="CHEBI:57856"/>
        <dbReference type="ChEBI" id="CHEBI:59789"/>
        <dbReference type="ChEBI" id="CHEBI:61961"/>
    </reaction>
</comment>
<comment type="subcellular location">
    <subcellularLocation>
        <location evidence="1">Cytoplasm</location>
    </subcellularLocation>
</comment>
<comment type="similarity">
    <text evidence="1">Belongs to the methyltransferase superfamily. PrmA family.</text>
</comment>
<dbReference type="EC" id="2.1.1.-" evidence="1"/>
<dbReference type="EMBL" id="AP009389">
    <property type="protein sequence ID" value="BAF59061.1"/>
    <property type="molecule type" value="Genomic_DNA"/>
</dbReference>
<dbReference type="SMR" id="A5D3Y3"/>
<dbReference type="STRING" id="370438.PTH_0880"/>
<dbReference type="KEGG" id="pth:PTH_0880"/>
<dbReference type="eggNOG" id="COG2264">
    <property type="taxonomic scope" value="Bacteria"/>
</dbReference>
<dbReference type="HOGENOM" id="CLU_049382_0_1_9"/>
<dbReference type="Proteomes" id="UP000006556">
    <property type="component" value="Chromosome"/>
</dbReference>
<dbReference type="GO" id="GO:0005737">
    <property type="term" value="C:cytoplasm"/>
    <property type="evidence" value="ECO:0007669"/>
    <property type="project" value="UniProtKB-SubCell"/>
</dbReference>
<dbReference type="GO" id="GO:0016279">
    <property type="term" value="F:protein-lysine N-methyltransferase activity"/>
    <property type="evidence" value="ECO:0007669"/>
    <property type="project" value="RHEA"/>
</dbReference>
<dbReference type="GO" id="GO:0032259">
    <property type="term" value="P:methylation"/>
    <property type="evidence" value="ECO:0007669"/>
    <property type="project" value="UniProtKB-KW"/>
</dbReference>
<dbReference type="CDD" id="cd02440">
    <property type="entry name" value="AdoMet_MTases"/>
    <property type="match status" value="1"/>
</dbReference>
<dbReference type="Gene3D" id="3.40.50.150">
    <property type="entry name" value="Vaccinia Virus protein VP39"/>
    <property type="match status" value="1"/>
</dbReference>
<dbReference type="HAMAP" id="MF_00735">
    <property type="entry name" value="Methyltr_PrmA"/>
    <property type="match status" value="1"/>
</dbReference>
<dbReference type="InterPro" id="IPR050078">
    <property type="entry name" value="Ribosomal_L11_MeTrfase_PrmA"/>
</dbReference>
<dbReference type="InterPro" id="IPR004498">
    <property type="entry name" value="Ribosomal_PrmA_MeTrfase"/>
</dbReference>
<dbReference type="InterPro" id="IPR029063">
    <property type="entry name" value="SAM-dependent_MTases_sf"/>
</dbReference>
<dbReference type="NCBIfam" id="TIGR00406">
    <property type="entry name" value="prmA"/>
    <property type="match status" value="1"/>
</dbReference>
<dbReference type="PANTHER" id="PTHR43648">
    <property type="entry name" value="ELECTRON TRANSFER FLAVOPROTEIN BETA SUBUNIT LYSINE METHYLTRANSFERASE"/>
    <property type="match status" value="1"/>
</dbReference>
<dbReference type="PANTHER" id="PTHR43648:SF1">
    <property type="entry name" value="ELECTRON TRANSFER FLAVOPROTEIN BETA SUBUNIT LYSINE METHYLTRANSFERASE"/>
    <property type="match status" value="1"/>
</dbReference>
<dbReference type="Pfam" id="PF06325">
    <property type="entry name" value="PrmA"/>
    <property type="match status" value="1"/>
</dbReference>
<dbReference type="PIRSF" id="PIRSF000401">
    <property type="entry name" value="RPL11_MTase"/>
    <property type="match status" value="1"/>
</dbReference>
<dbReference type="SUPFAM" id="SSF53335">
    <property type="entry name" value="S-adenosyl-L-methionine-dependent methyltransferases"/>
    <property type="match status" value="1"/>
</dbReference>
<accession>A5D3Y3</accession>
<protein>
    <recommendedName>
        <fullName evidence="1">Ribosomal protein L11 methyltransferase</fullName>
        <shortName evidence="1">L11 Mtase</shortName>
        <ecNumber evidence="1">2.1.1.-</ecNumber>
    </recommendedName>
</protein>